<accession>B8CW65</accession>
<name>SYP_HALOH</name>
<feature type="chain" id="PRO_1000185504" description="Proline--tRNA ligase">
    <location>
        <begin position="1"/>
        <end position="568"/>
    </location>
</feature>
<proteinExistence type="inferred from homology"/>
<dbReference type="EC" id="6.1.1.15" evidence="1"/>
<dbReference type="EMBL" id="CP001098">
    <property type="protein sequence ID" value="ACL69534.1"/>
    <property type="molecule type" value="Genomic_DNA"/>
</dbReference>
<dbReference type="RefSeq" id="WP_012635722.1">
    <property type="nucleotide sequence ID" value="NC_011899.1"/>
</dbReference>
<dbReference type="SMR" id="B8CW65"/>
<dbReference type="STRING" id="373903.Hore_07770"/>
<dbReference type="KEGG" id="hor:Hore_07770"/>
<dbReference type="eggNOG" id="COG0442">
    <property type="taxonomic scope" value="Bacteria"/>
</dbReference>
<dbReference type="HOGENOM" id="CLU_016739_0_0_9"/>
<dbReference type="OrthoDB" id="9809052at2"/>
<dbReference type="Proteomes" id="UP000000719">
    <property type="component" value="Chromosome"/>
</dbReference>
<dbReference type="GO" id="GO:0005829">
    <property type="term" value="C:cytosol"/>
    <property type="evidence" value="ECO:0007669"/>
    <property type="project" value="TreeGrafter"/>
</dbReference>
<dbReference type="GO" id="GO:0002161">
    <property type="term" value="F:aminoacyl-tRNA deacylase activity"/>
    <property type="evidence" value="ECO:0007669"/>
    <property type="project" value="InterPro"/>
</dbReference>
<dbReference type="GO" id="GO:0005524">
    <property type="term" value="F:ATP binding"/>
    <property type="evidence" value="ECO:0007669"/>
    <property type="project" value="UniProtKB-UniRule"/>
</dbReference>
<dbReference type="GO" id="GO:0140096">
    <property type="term" value="F:catalytic activity, acting on a protein"/>
    <property type="evidence" value="ECO:0007669"/>
    <property type="project" value="UniProtKB-ARBA"/>
</dbReference>
<dbReference type="GO" id="GO:0004827">
    <property type="term" value="F:proline-tRNA ligase activity"/>
    <property type="evidence" value="ECO:0007669"/>
    <property type="project" value="UniProtKB-UniRule"/>
</dbReference>
<dbReference type="GO" id="GO:0016740">
    <property type="term" value="F:transferase activity"/>
    <property type="evidence" value="ECO:0007669"/>
    <property type="project" value="UniProtKB-ARBA"/>
</dbReference>
<dbReference type="GO" id="GO:0006433">
    <property type="term" value="P:prolyl-tRNA aminoacylation"/>
    <property type="evidence" value="ECO:0007669"/>
    <property type="project" value="UniProtKB-UniRule"/>
</dbReference>
<dbReference type="CDD" id="cd04334">
    <property type="entry name" value="ProRS-INS"/>
    <property type="match status" value="1"/>
</dbReference>
<dbReference type="CDD" id="cd00861">
    <property type="entry name" value="ProRS_anticodon_short"/>
    <property type="match status" value="1"/>
</dbReference>
<dbReference type="CDD" id="cd00779">
    <property type="entry name" value="ProRS_core_prok"/>
    <property type="match status" value="1"/>
</dbReference>
<dbReference type="FunFam" id="3.30.930.10:FF:000066">
    <property type="entry name" value="Proline--tRNA ligase"/>
    <property type="match status" value="1"/>
</dbReference>
<dbReference type="FunFam" id="3.30.930.10:FF:000097">
    <property type="entry name" value="Proline--tRNA ligase"/>
    <property type="match status" value="1"/>
</dbReference>
<dbReference type="Gene3D" id="3.40.50.800">
    <property type="entry name" value="Anticodon-binding domain"/>
    <property type="match status" value="1"/>
</dbReference>
<dbReference type="Gene3D" id="3.30.930.10">
    <property type="entry name" value="Bira Bifunctional Protein, Domain 2"/>
    <property type="match status" value="2"/>
</dbReference>
<dbReference type="HAMAP" id="MF_01569">
    <property type="entry name" value="Pro_tRNA_synth_type1"/>
    <property type="match status" value="1"/>
</dbReference>
<dbReference type="InterPro" id="IPR002314">
    <property type="entry name" value="aa-tRNA-synt_IIb"/>
</dbReference>
<dbReference type="InterPro" id="IPR006195">
    <property type="entry name" value="aa-tRNA-synth_II"/>
</dbReference>
<dbReference type="InterPro" id="IPR045864">
    <property type="entry name" value="aa-tRNA-synth_II/BPL/LPL"/>
</dbReference>
<dbReference type="InterPro" id="IPR004154">
    <property type="entry name" value="Anticodon-bd"/>
</dbReference>
<dbReference type="InterPro" id="IPR036621">
    <property type="entry name" value="Anticodon-bd_dom_sf"/>
</dbReference>
<dbReference type="InterPro" id="IPR002316">
    <property type="entry name" value="Pro-tRNA-ligase_IIa"/>
</dbReference>
<dbReference type="InterPro" id="IPR004500">
    <property type="entry name" value="Pro-tRNA-synth_IIa_bac-type"/>
</dbReference>
<dbReference type="InterPro" id="IPR023717">
    <property type="entry name" value="Pro-tRNA-Synthase_IIa_type1"/>
</dbReference>
<dbReference type="InterPro" id="IPR050062">
    <property type="entry name" value="Pro-tRNA_synthetase"/>
</dbReference>
<dbReference type="InterPro" id="IPR044140">
    <property type="entry name" value="ProRS_anticodon_short"/>
</dbReference>
<dbReference type="InterPro" id="IPR033730">
    <property type="entry name" value="ProRS_core_prok"/>
</dbReference>
<dbReference type="InterPro" id="IPR036754">
    <property type="entry name" value="YbaK/aa-tRNA-synt-asso_dom_sf"/>
</dbReference>
<dbReference type="InterPro" id="IPR007214">
    <property type="entry name" value="YbaK/aa-tRNA-synth-assoc-dom"/>
</dbReference>
<dbReference type="NCBIfam" id="NF006625">
    <property type="entry name" value="PRK09194.1"/>
    <property type="match status" value="1"/>
</dbReference>
<dbReference type="NCBIfam" id="TIGR00409">
    <property type="entry name" value="proS_fam_II"/>
    <property type="match status" value="1"/>
</dbReference>
<dbReference type="PANTHER" id="PTHR42753">
    <property type="entry name" value="MITOCHONDRIAL RIBOSOME PROTEIN L39/PROLYL-TRNA LIGASE FAMILY MEMBER"/>
    <property type="match status" value="1"/>
</dbReference>
<dbReference type="PANTHER" id="PTHR42753:SF2">
    <property type="entry name" value="PROLINE--TRNA LIGASE"/>
    <property type="match status" value="1"/>
</dbReference>
<dbReference type="Pfam" id="PF03129">
    <property type="entry name" value="HGTP_anticodon"/>
    <property type="match status" value="1"/>
</dbReference>
<dbReference type="Pfam" id="PF00587">
    <property type="entry name" value="tRNA-synt_2b"/>
    <property type="match status" value="1"/>
</dbReference>
<dbReference type="Pfam" id="PF04073">
    <property type="entry name" value="tRNA_edit"/>
    <property type="match status" value="1"/>
</dbReference>
<dbReference type="PIRSF" id="PIRSF001535">
    <property type="entry name" value="ProRS_1"/>
    <property type="match status" value="1"/>
</dbReference>
<dbReference type="PRINTS" id="PR01046">
    <property type="entry name" value="TRNASYNTHPRO"/>
</dbReference>
<dbReference type="SUPFAM" id="SSF52954">
    <property type="entry name" value="Class II aaRS ABD-related"/>
    <property type="match status" value="1"/>
</dbReference>
<dbReference type="SUPFAM" id="SSF55681">
    <property type="entry name" value="Class II aaRS and biotin synthetases"/>
    <property type="match status" value="1"/>
</dbReference>
<dbReference type="SUPFAM" id="SSF55826">
    <property type="entry name" value="YbaK/ProRS associated domain"/>
    <property type="match status" value="1"/>
</dbReference>
<dbReference type="PROSITE" id="PS50862">
    <property type="entry name" value="AA_TRNA_LIGASE_II"/>
    <property type="match status" value="1"/>
</dbReference>
<sequence length="568" mass="64501">MRMSNLYIPTLKEVPKEAEVVSHQLMLRAGLIRNLTAGVYSFLPLGYRVIKKIEGIIRKVMDESGAQEVLMPVIHTSDLWKESGRWEKFGPLMIKFEDRKGREYCLGPTHEEVITDLVRDEIRSYKDLPLNLYQIQTKVRDEIRPRFGLMRSREFIMKDAYSFDRDYEGLDKSYQVMYGAYTEVFNRCGLEVRAVEADTGAMGGKDSHEFMVLAESGEDDIAFCNRCDYAANVERAEARYVKSEKNEEIKPLEKVETPGKKKIDELVEFLKMPSEKMIKAVAYLADGEPVLALVRGDDELNEVKLINYLDVIELTPVVDEDFPQYYNSYAGYVGPIGLKNVRIIADRKVKDIVNGICGANEENYHFINVNPERDFSVEKYLDIRKVKEGDQCPHCEGTIEIKSGIEVGHIFKLGTKYSESMGATYLDENGKEQPIVMGSYGIGVTRLVAAAIEQNHDEHGIIWPKAIAPYQVIILPLGKGDEVNKRAEELYLELKDNNIEVLLDDRNERAGVKFNDADLIGIPLRLTIGSRSLDKGVIEARVRGTGQDYEISVEDAIKDIKKLLENVK</sequence>
<organism>
    <name type="scientific">Halothermothrix orenii (strain H 168 / OCM 544 / DSM 9562)</name>
    <dbReference type="NCBI Taxonomy" id="373903"/>
    <lineage>
        <taxon>Bacteria</taxon>
        <taxon>Bacillati</taxon>
        <taxon>Bacillota</taxon>
        <taxon>Clostridia</taxon>
        <taxon>Halanaerobiales</taxon>
        <taxon>Halothermotrichaceae</taxon>
        <taxon>Halothermothrix</taxon>
    </lineage>
</organism>
<gene>
    <name evidence="1" type="primary">proS</name>
    <name type="ordered locus">Hore_07770</name>
</gene>
<protein>
    <recommendedName>
        <fullName evidence="1">Proline--tRNA ligase</fullName>
        <ecNumber evidence="1">6.1.1.15</ecNumber>
    </recommendedName>
    <alternativeName>
        <fullName evidence="1">Prolyl-tRNA synthetase</fullName>
        <shortName evidence="1">ProRS</shortName>
    </alternativeName>
</protein>
<comment type="function">
    <text evidence="1">Catalyzes the attachment of proline to tRNA(Pro) in a two-step reaction: proline is first activated by ATP to form Pro-AMP and then transferred to the acceptor end of tRNA(Pro). As ProRS can inadvertently accommodate and process non-cognate amino acids such as alanine and cysteine, to avoid such errors it has two additional distinct editing activities against alanine. One activity is designated as 'pretransfer' editing and involves the tRNA(Pro)-independent hydrolysis of activated Ala-AMP. The other activity is designated 'posttransfer' editing and involves deacylation of mischarged Ala-tRNA(Pro). The misacylated Cys-tRNA(Pro) is not edited by ProRS.</text>
</comment>
<comment type="catalytic activity">
    <reaction evidence="1">
        <text>tRNA(Pro) + L-proline + ATP = L-prolyl-tRNA(Pro) + AMP + diphosphate</text>
        <dbReference type="Rhea" id="RHEA:14305"/>
        <dbReference type="Rhea" id="RHEA-COMP:9700"/>
        <dbReference type="Rhea" id="RHEA-COMP:9702"/>
        <dbReference type="ChEBI" id="CHEBI:30616"/>
        <dbReference type="ChEBI" id="CHEBI:33019"/>
        <dbReference type="ChEBI" id="CHEBI:60039"/>
        <dbReference type="ChEBI" id="CHEBI:78442"/>
        <dbReference type="ChEBI" id="CHEBI:78532"/>
        <dbReference type="ChEBI" id="CHEBI:456215"/>
        <dbReference type="EC" id="6.1.1.15"/>
    </reaction>
</comment>
<comment type="subunit">
    <text evidence="1">Homodimer.</text>
</comment>
<comment type="subcellular location">
    <subcellularLocation>
        <location evidence="1">Cytoplasm</location>
    </subcellularLocation>
</comment>
<comment type="domain">
    <text evidence="1">Consists of three domains: the N-terminal catalytic domain, the editing domain and the C-terminal anticodon-binding domain.</text>
</comment>
<comment type="similarity">
    <text evidence="1">Belongs to the class-II aminoacyl-tRNA synthetase family. ProS type 1 subfamily.</text>
</comment>
<evidence type="ECO:0000255" key="1">
    <source>
        <dbReference type="HAMAP-Rule" id="MF_01569"/>
    </source>
</evidence>
<reference key="1">
    <citation type="journal article" date="2009" name="PLoS ONE">
        <title>Genome analysis of the anaerobic thermohalophilic bacterium Halothermothrix orenii.</title>
        <authorList>
            <person name="Mavromatis K."/>
            <person name="Ivanova N."/>
            <person name="Anderson I."/>
            <person name="Lykidis A."/>
            <person name="Hooper S.D."/>
            <person name="Sun H."/>
            <person name="Kunin V."/>
            <person name="Lapidus A."/>
            <person name="Hugenholtz P."/>
            <person name="Patel B."/>
            <person name="Kyrpides N.C."/>
        </authorList>
    </citation>
    <scope>NUCLEOTIDE SEQUENCE [LARGE SCALE GENOMIC DNA]</scope>
    <source>
        <strain>H 168 / OCM 544 / DSM 9562</strain>
    </source>
</reference>
<keyword id="KW-0030">Aminoacyl-tRNA synthetase</keyword>
<keyword id="KW-0067">ATP-binding</keyword>
<keyword id="KW-0963">Cytoplasm</keyword>
<keyword id="KW-0436">Ligase</keyword>
<keyword id="KW-0547">Nucleotide-binding</keyword>
<keyword id="KW-0648">Protein biosynthesis</keyword>
<keyword id="KW-1185">Reference proteome</keyword>